<comment type="function">
    <text evidence="1">Catalyzes the interconversion of 2-phosphoglycerate and 3-phosphoglycerate.</text>
</comment>
<comment type="catalytic activity">
    <reaction evidence="1">
        <text>(2R)-2-phosphoglycerate = (2R)-3-phosphoglycerate</text>
        <dbReference type="Rhea" id="RHEA:15901"/>
        <dbReference type="ChEBI" id="CHEBI:58272"/>
        <dbReference type="ChEBI" id="CHEBI:58289"/>
        <dbReference type="EC" id="5.4.2.11"/>
    </reaction>
</comment>
<comment type="pathway">
    <text evidence="1">Carbohydrate degradation; glycolysis; pyruvate from D-glyceraldehyde 3-phosphate: step 3/5.</text>
</comment>
<comment type="subunit">
    <text evidence="1">Homodimer.</text>
</comment>
<comment type="similarity">
    <text evidence="1">Belongs to the phosphoglycerate mutase family. BPG-dependent PGAM subfamily.</text>
</comment>
<protein>
    <recommendedName>
        <fullName evidence="1">2,3-bisphosphoglycerate-dependent phosphoglycerate mutase</fullName>
        <shortName evidence="1">BPG-dependent PGAM</shortName>
        <shortName evidence="1">PGAM</shortName>
        <shortName evidence="1">Phosphoglyceromutase</shortName>
        <shortName evidence="1">dPGM</shortName>
        <ecNumber evidence="1">5.4.2.11</ecNumber>
    </recommendedName>
</protein>
<proteinExistence type="inferred from homology"/>
<accession>Q2YJN6</accession>
<sequence length="206" mass="22886">MSRTLVLVRHGQSEWNLKNLFTGWRDPGLTEQGHAEAKAAGQRLKAAGLKFDIAYTSALSRAQVTCQHILDELGQPGLETIRDQALNERDYGDLSGLNKDDARAKWGEEQVHIWRRSYDVPPPGGESLKDTGARVWPYYLHTIQPHVLREETVLVAAHGNSLRALIMALDGLTPEQILKQELNTGVPIIYRLNADSTVASKEILSA</sequence>
<dbReference type="EC" id="5.4.2.11" evidence="1"/>
<dbReference type="EMBL" id="AM040265">
    <property type="protein sequence ID" value="CAJ13179.1"/>
    <property type="molecule type" value="Genomic_DNA"/>
</dbReference>
<dbReference type="RefSeq" id="WP_002965600.1">
    <property type="nucleotide sequence ID" value="NZ_KN046823.1"/>
</dbReference>
<dbReference type="SMR" id="Q2YJN6"/>
<dbReference type="STRING" id="359391.BAB2_1013"/>
<dbReference type="KEGG" id="bmf:BAB2_1013"/>
<dbReference type="PATRIC" id="fig|359391.11.peg.700"/>
<dbReference type="HOGENOM" id="CLU_033323_1_4_5"/>
<dbReference type="PhylomeDB" id="Q2YJN6"/>
<dbReference type="BRENDA" id="5.4.2.11">
    <property type="organism ID" value="994"/>
</dbReference>
<dbReference type="UniPathway" id="UPA00109">
    <property type="reaction ID" value="UER00186"/>
</dbReference>
<dbReference type="Proteomes" id="UP000002719">
    <property type="component" value="Chromosome II"/>
</dbReference>
<dbReference type="GO" id="GO:0004619">
    <property type="term" value="F:phosphoglycerate mutase activity"/>
    <property type="evidence" value="ECO:0007669"/>
    <property type="project" value="UniProtKB-EC"/>
</dbReference>
<dbReference type="GO" id="GO:0006094">
    <property type="term" value="P:gluconeogenesis"/>
    <property type="evidence" value="ECO:0007669"/>
    <property type="project" value="UniProtKB-UniRule"/>
</dbReference>
<dbReference type="GO" id="GO:0006096">
    <property type="term" value="P:glycolytic process"/>
    <property type="evidence" value="ECO:0007669"/>
    <property type="project" value="UniProtKB-UniRule"/>
</dbReference>
<dbReference type="CDD" id="cd07067">
    <property type="entry name" value="HP_PGM_like"/>
    <property type="match status" value="1"/>
</dbReference>
<dbReference type="Gene3D" id="3.40.50.1240">
    <property type="entry name" value="Phosphoglycerate mutase-like"/>
    <property type="match status" value="1"/>
</dbReference>
<dbReference type="HAMAP" id="MF_01039">
    <property type="entry name" value="PGAM_GpmA"/>
    <property type="match status" value="1"/>
</dbReference>
<dbReference type="InterPro" id="IPR013078">
    <property type="entry name" value="His_Pase_superF_clade-1"/>
</dbReference>
<dbReference type="InterPro" id="IPR029033">
    <property type="entry name" value="His_PPase_superfam"/>
</dbReference>
<dbReference type="InterPro" id="IPR001345">
    <property type="entry name" value="PG/BPGM_mutase_AS"/>
</dbReference>
<dbReference type="InterPro" id="IPR005952">
    <property type="entry name" value="Phosphogly_mut1"/>
</dbReference>
<dbReference type="NCBIfam" id="TIGR01258">
    <property type="entry name" value="pgm_1"/>
    <property type="match status" value="1"/>
</dbReference>
<dbReference type="NCBIfam" id="NF002339">
    <property type="entry name" value="PRK01295.1"/>
    <property type="match status" value="1"/>
</dbReference>
<dbReference type="PANTHER" id="PTHR11931">
    <property type="entry name" value="PHOSPHOGLYCERATE MUTASE"/>
    <property type="match status" value="1"/>
</dbReference>
<dbReference type="Pfam" id="PF00300">
    <property type="entry name" value="His_Phos_1"/>
    <property type="match status" value="1"/>
</dbReference>
<dbReference type="PIRSF" id="PIRSF000709">
    <property type="entry name" value="6PFK_2-Ptase"/>
    <property type="match status" value="1"/>
</dbReference>
<dbReference type="SMART" id="SM00855">
    <property type="entry name" value="PGAM"/>
    <property type="match status" value="1"/>
</dbReference>
<dbReference type="SUPFAM" id="SSF53254">
    <property type="entry name" value="Phosphoglycerate mutase-like"/>
    <property type="match status" value="1"/>
</dbReference>
<dbReference type="PROSITE" id="PS00175">
    <property type="entry name" value="PG_MUTASE"/>
    <property type="match status" value="1"/>
</dbReference>
<feature type="chain" id="PRO_0000229110" description="2,3-bisphosphoglycerate-dependent phosphoglycerate mutase">
    <location>
        <begin position="1"/>
        <end position="206"/>
    </location>
</feature>
<feature type="active site" description="Tele-phosphohistidine intermediate" evidence="1">
    <location>
        <position position="10"/>
    </location>
</feature>
<feature type="active site" description="Proton donor/acceptor" evidence="1">
    <location>
        <position position="88"/>
    </location>
</feature>
<feature type="binding site" evidence="1">
    <location>
        <begin position="9"/>
        <end position="16"/>
    </location>
    <ligand>
        <name>substrate</name>
    </ligand>
</feature>
<feature type="binding site" evidence="1">
    <location>
        <begin position="22"/>
        <end position="23"/>
    </location>
    <ligand>
        <name>substrate</name>
    </ligand>
</feature>
<feature type="binding site" evidence="1">
    <location>
        <position position="61"/>
    </location>
    <ligand>
        <name>substrate</name>
    </ligand>
</feature>
<feature type="binding site" evidence="1">
    <location>
        <begin position="88"/>
        <end position="91"/>
    </location>
    <ligand>
        <name>substrate</name>
    </ligand>
</feature>
<feature type="binding site" evidence="1">
    <location>
        <position position="99"/>
    </location>
    <ligand>
        <name>substrate</name>
    </ligand>
</feature>
<feature type="binding site" evidence="1">
    <location>
        <begin position="115"/>
        <end position="116"/>
    </location>
    <ligand>
        <name>substrate</name>
    </ligand>
</feature>
<feature type="binding site" evidence="1">
    <location>
        <begin position="159"/>
        <end position="160"/>
    </location>
    <ligand>
        <name>substrate</name>
    </ligand>
</feature>
<feature type="site" description="Transition state stabilizer" evidence="1">
    <location>
        <position position="158"/>
    </location>
</feature>
<evidence type="ECO:0000255" key="1">
    <source>
        <dbReference type="HAMAP-Rule" id="MF_01039"/>
    </source>
</evidence>
<organism>
    <name type="scientific">Brucella abortus (strain 2308)</name>
    <dbReference type="NCBI Taxonomy" id="359391"/>
    <lineage>
        <taxon>Bacteria</taxon>
        <taxon>Pseudomonadati</taxon>
        <taxon>Pseudomonadota</taxon>
        <taxon>Alphaproteobacteria</taxon>
        <taxon>Hyphomicrobiales</taxon>
        <taxon>Brucellaceae</taxon>
        <taxon>Brucella/Ochrobactrum group</taxon>
        <taxon>Brucella</taxon>
    </lineage>
</organism>
<gene>
    <name evidence="1" type="primary">gpmA</name>
    <name type="ordered locus">BAB2_1013</name>
</gene>
<reference key="1">
    <citation type="journal article" date="2005" name="Infect. Immun.">
        <title>Whole-genome analyses of speciation events in pathogenic Brucellae.</title>
        <authorList>
            <person name="Chain P.S."/>
            <person name="Comerci D.J."/>
            <person name="Tolmasky M.E."/>
            <person name="Larimer F.W."/>
            <person name="Malfatti S.A."/>
            <person name="Vergez L.M."/>
            <person name="Aguero F."/>
            <person name="Land M.L."/>
            <person name="Ugalde R.A."/>
            <person name="Garcia E."/>
        </authorList>
    </citation>
    <scope>NUCLEOTIDE SEQUENCE [LARGE SCALE GENOMIC DNA]</scope>
    <source>
        <strain>2308</strain>
    </source>
</reference>
<name>GPMA_BRUA2</name>
<keyword id="KW-0312">Gluconeogenesis</keyword>
<keyword id="KW-0324">Glycolysis</keyword>
<keyword id="KW-0413">Isomerase</keyword>
<keyword id="KW-1185">Reference proteome</keyword>